<gene>
    <name evidence="1" type="primary">mnmG</name>
    <name evidence="1" type="synonym">gidA</name>
    <name type="ordered locus">YPTB3976</name>
</gene>
<protein>
    <recommendedName>
        <fullName evidence="1">tRNA uridine 5-carboxymethylaminomethyl modification enzyme MnmG</fullName>
    </recommendedName>
    <alternativeName>
        <fullName evidence="1">Glucose-inhibited division protein A</fullName>
    </alternativeName>
</protein>
<reference key="1">
    <citation type="journal article" date="2004" name="Proc. Natl. Acad. Sci. U.S.A.">
        <title>Insights into the evolution of Yersinia pestis through whole-genome comparison with Yersinia pseudotuberculosis.</title>
        <authorList>
            <person name="Chain P.S.G."/>
            <person name="Carniel E."/>
            <person name="Larimer F.W."/>
            <person name="Lamerdin J."/>
            <person name="Stoutland P.O."/>
            <person name="Regala W.M."/>
            <person name="Georgescu A.M."/>
            <person name="Vergez L.M."/>
            <person name="Land M.L."/>
            <person name="Motin V.L."/>
            <person name="Brubaker R.R."/>
            <person name="Fowler J."/>
            <person name="Hinnebusch J."/>
            <person name="Marceau M."/>
            <person name="Medigue C."/>
            <person name="Simonet M."/>
            <person name="Chenal-Francisque V."/>
            <person name="Souza B."/>
            <person name="Dacheux D."/>
            <person name="Elliott J.M."/>
            <person name="Derbise A."/>
            <person name="Hauser L.J."/>
            <person name="Garcia E."/>
        </authorList>
    </citation>
    <scope>NUCLEOTIDE SEQUENCE [LARGE SCALE GENOMIC DNA]</scope>
    <source>
        <strain>IP32953</strain>
    </source>
</reference>
<keyword id="KW-0963">Cytoplasm</keyword>
<keyword id="KW-0274">FAD</keyword>
<keyword id="KW-0285">Flavoprotein</keyword>
<keyword id="KW-0520">NAD</keyword>
<keyword id="KW-0819">tRNA processing</keyword>
<accession>Q663P9</accession>
<organism>
    <name type="scientific">Yersinia pseudotuberculosis serotype I (strain IP32953)</name>
    <dbReference type="NCBI Taxonomy" id="273123"/>
    <lineage>
        <taxon>Bacteria</taxon>
        <taxon>Pseudomonadati</taxon>
        <taxon>Pseudomonadota</taxon>
        <taxon>Gammaproteobacteria</taxon>
        <taxon>Enterobacterales</taxon>
        <taxon>Yersiniaceae</taxon>
        <taxon>Yersinia</taxon>
    </lineage>
</organism>
<comment type="function">
    <text evidence="1">NAD-binding protein involved in the addition of a carboxymethylaminomethyl (cmnm) group at the wobble position (U34) of certain tRNAs, forming tRNA-cmnm(5)s(2)U34.</text>
</comment>
<comment type="cofactor">
    <cofactor evidence="1">
        <name>FAD</name>
        <dbReference type="ChEBI" id="CHEBI:57692"/>
    </cofactor>
</comment>
<comment type="subunit">
    <text evidence="1">Homodimer. Heterotetramer of two MnmE and two MnmG subunits.</text>
</comment>
<comment type="subcellular location">
    <subcellularLocation>
        <location evidence="1">Cytoplasm</location>
    </subcellularLocation>
</comment>
<comment type="similarity">
    <text evidence="1">Belongs to the MnmG family.</text>
</comment>
<dbReference type="EMBL" id="BX936398">
    <property type="protein sequence ID" value="CAH23214.1"/>
    <property type="molecule type" value="Genomic_DNA"/>
</dbReference>
<dbReference type="RefSeq" id="WP_002212259.1">
    <property type="nucleotide sequence ID" value="NZ_CP009712.1"/>
</dbReference>
<dbReference type="SMR" id="Q663P9"/>
<dbReference type="GeneID" id="57974594"/>
<dbReference type="KEGG" id="ypo:BZ17_2599"/>
<dbReference type="KEGG" id="yps:YPTB3976"/>
<dbReference type="PATRIC" id="fig|273123.14.peg.2725"/>
<dbReference type="Proteomes" id="UP000001011">
    <property type="component" value="Chromosome"/>
</dbReference>
<dbReference type="GO" id="GO:0005829">
    <property type="term" value="C:cytosol"/>
    <property type="evidence" value="ECO:0007669"/>
    <property type="project" value="TreeGrafter"/>
</dbReference>
<dbReference type="GO" id="GO:0050660">
    <property type="term" value="F:flavin adenine dinucleotide binding"/>
    <property type="evidence" value="ECO:0007669"/>
    <property type="project" value="UniProtKB-UniRule"/>
</dbReference>
<dbReference type="GO" id="GO:0030488">
    <property type="term" value="P:tRNA methylation"/>
    <property type="evidence" value="ECO:0007669"/>
    <property type="project" value="TreeGrafter"/>
</dbReference>
<dbReference type="GO" id="GO:0002098">
    <property type="term" value="P:tRNA wobble uridine modification"/>
    <property type="evidence" value="ECO:0007669"/>
    <property type="project" value="InterPro"/>
</dbReference>
<dbReference type="FunFam" id="1.10.10.1800:FF:000001">
    <property type="entry name" value="tRNA uridine 5-carboxymethylaminomethyl modification enzyme MnmG"/>
    <property type="match status" value="1"/>
</dbReference>
<dbReference type="FunFam" id="1.10.150.570:FF:000001">
    <property type="entry name" value="tRNA uridine 5-carboxymethylaminomethyl modification enzyme MnmG"/>
    <property type="match status" value="1"/>
</dbReference>
<dbReference type="FunFam" id="3.50.50.60:FF:000002">
    <property type="entry name" value="tRNA uridine 5-carboxymethylaminomethyl modification enzyme MnmG"/>
    <property type="match status" value="1"/>
</dbReference>
<dbReference type="FunFam" id="3.50.50.60:FF:000010">
    <property type="entry name" value="tRNA uridine 5-carboxymethylaminomethyl modification enzyme MnmG"/>
    <property type="match status" value="1"/>
</dbReference>
<dbReference type="Gene3D" id="3.50.50.60">
    <property type="entry name" value="FAD/NAD(P)-binding domain"/>
    <property type="match status" value="2"/>
</dbReference>
<dbReference type="Gene3D" id="1.10.150.570">
    <property type="entry name" value="GidA associated domain, C-terminal subdomain"/>
    <property type="match status" value="1"/>
</dbReference>
<dbReference type="Gene3D" id="1.10.10.1800">
    <property type="entry name" value="tRNA uridine 5-carboxymethylaminomethyl modification enzyme MnmG/GidA"/>
    <property type="match status" value="1"/>
</dbReference>
<dbReference type="HAMAP" id="MF_00129">
    <property type="entry name" value="MnmG_GidA"/>
    <property type="match status" value="1"/>
</dbReference>
<dbReference type="InterPro" id="IPR036188">
    <property type="entry name" value="FAD/NAD-bd_sf"/>
</dbReference>
<dbReference type="InterPro" id="IPR049312">
    <property type="entry name" value="GIDA_C_N"/>
</dbReference>
<dbReference type="InterPro" id="IPR004416">
    <property type="entry name" value="MnmG"/>
</dbReference>
<dbReference type="InterPro" id="IPR002218">
    <property type="entry name" value="MnmG-rel"/>
</dbReference>
<dbReference type="InterPro" id="IPR020595">
    <property type="entry name" value="MnmG-rel_CS"/>
</dbReference>
<dbReference type="InterPro" id="IPR026904">
    <property type="entry name" value="MnmG_C"/>
</dbReference>
<dbReference type="InterPro" id="IPR047001">
    <property type="entry name" value="MnmG_C_subdom"/>
</dbReference>
<dbReference type="InterPro" id="IPR044920">
    <property type="entry name" value="MnmG_C_subdom_sf"/>
</dbReference>
<dbReference type="InterPro" id="IPR040131">
    <property type="entry name" value="MnmG_N"/>
</dbReference>
<dbReference type="NCBIfam" id="TIGR00136">
    <property type="entry name" value="mnmG_gidA"/>
    <property type="match status" value="1"/>
</dbReference>
<dbReference type="PANTHER" id="PTHR11806">
    <property type="entry name" value="GLUCOSE INHIBITED DIVISION PROTEIN A"/>
    <property type="match status" value="1"/>
</dbReference>
<dbReference type="PANTHER" id="PTHR11806:SF0">
    <property type="entry name" value="PROTEIN MTO1 HOMOLOG, MITOCHONDRIAL"/>
    <property type="match status" value="1"/>
</dbReference>
<dbReference type="Pfam" id="PF01134">
    <property type="entry name" value="GIDA"/>
    <property type="match status" value="1"/>
</dbReference>
<dbReference type="Pfam" id="PF21680">
    <property type="entry name" value="GIDA_C_1st"/>
    <property type="match status" value="1"/>
</dbReference>
<dbReference type="Pfam" id="PF13932">
    <property type="entry name" value="SAM_GIDA_C"/>
    <property type="match status" value="1"/>
</dbReference>
<dbReference type="SMART" id="SM01228">
    <property type="entry name" value="GIDA_assoc_3"/>
    <property type="match status" value="1"/>
</dbReference>
<dbReference type="SUPFAM" id="SSF51905">
    <property type="entry name" value="FAD/NAD(P)-binding domain"/>
    <property type="match status" value="1"/>
</dbReference>
<dbReference type="PROSITE" id="PS01280">
    <property type="entry name" value="GIDA_1"/>
    <property type="match status" value="1"/>
</dbReference>
<dbReference type="PROSITE" id="PS01281">
    <property type="entry name" value="GIDA_2"/>
    <property type="match status" value="1"/>
</dbReference>
<proteinExistence type="inferred from homology"/>
<feature type="chain" id="PRO_0000117224" description="tRNA uridine 5-carboxymethylaminomethyl modification enzyme MnmG">
    <location>
        <begin position="1"/>
        <end position="629"/>
    </location>
</feature>
<feature type="binding site" evidence="1">
    <location>
        <begin position="13"/>
        <end position="18"/>
    </location>
    <ligand>
        <name>FAD</name>
        <dbReference type="ChEBI" id="CHEBI:57692"/>
    </ligand>
</feature>
<feature type="binding site" evidence="1">
    <location>
        <position position="125"/>
    </location>
    <ligand>
        <name>FAD</name>
        <dbReference type="ChEBI" id="CHEBI:57692"/>
    </ligand>
</feature>
<feature type="binding site" evidence="1">
    <location>
        <position position="180"/>
    </location>
    <ligand>
        <name>FAD</name>
        <dbReference type="ChEBI" id="CHEBI:57692"/>
    </ligand>
</feature>
<feature type="binding site" evidence="1">
    <location>
        <begin position="273"/>
        <end position="287"/>
    </location>
    <ligand>
        <name>NAD(+)</name>
        <dbReference type="ChEBI" id="CHEBI:57540"/>
    </ligand>
</feature>
<feature type="binding site" evidence="1">
    <location>
        <position position="370"/>
    </location>
    <ligand>
        <name>FAD</name>
        <dbReference type="ChEBI" id="CHEBI:57692"/>
    </ligand>
</feature>
<evidence type="ECO:0000255" key="1">
    <source>
        <dbReference type="HAMAP-Rule" id="MF_00129"/>
    </source>
</evidence>
<name>MNMG_YERPS</name>
<sequence>MFYPDQFDVIIIGGGHAGTEAAMAAARMGRQTLLLTHNIDTLGQMSCNPAIGGIGKGHLVKEIDALGGLMAKATDLAGIQFRILNASKGPAVRATRAQADRVLYRLAVRTALENQPNLMIFQQPVEDLIVENDRVVGAVTQMGLKFRAKAVVLTVGTFLDGKIHIGLENYSGGRAGDPPSISLSQRLRELPLRVNRLKTGTPPRIDARTIDFSQLTPQLGDTPIPVFSFLGNAEQHPEQMACHITYTNEKTHEVIRNNLDRSPMYAGIIEGIGPRYCPSIEDKVMRFADRNSHQIFLEPEGLTSNEIYPNGISTSLPFDVQMQIVRSMKGLENARIIRPGYAIEYDFFDPRDLKPTLESKYIQGLFFAGQINGTTGYEEAAAQGLLAGLNAGRFANEEDGWSPRRDEAYLGVLVDDLSTLGTKEPYRMFTSRAEYRLMLREDNADLRLTETGRKLGLVDDIRWAHFSQKVEQIEKERQRLRDIWVHPHSENVSEINALLKAPLSKEANGEELLRRPEIDYRLLTSLTSFGPALTDPQSADQVEIQVKYEGYITRQQEEIEKQLRNENTLLPVDLDYQQVSGLSNEVIAKLNDHKPSSIGQASRISGITPAAISILLVWLKKQGLLRRSA</sequence>